<feature type="chain" id="PRO_0000392882" description="Dermonecrotic toxin SdSicTox-betaIIB1ai">
    <location>
        <begin position="1" status="less than"/>
        <end position="274"/>
    </location>
</feature>
<feature type="active site" evidence="5">
    <location>
        <position position="5"/>
    </location>
</feature>
<feature type="active site" description="Nucleophile" evidence="5">
    <location>
        <position position="41"/>
    </location>
</feature>
<feature type="binding site" evidence="5">
    <location>
        <position position="25"/>
    </location>
    <ligand>
        <name>Mg(2+)</name>
        <dbReference type="ChEBI" id="CHEBI:18420"/>
    </ligand>
</feature>
<feature type="binding site" evidence="5">
    <location>
        <position position="27"/>
    </location>
    <ligand>
        <name>Mg(2+)</name>
        <dbReference type="ChEBI" id="CHEBI:18420"/>
    </ligand>
</feature>
<feature type="binding site" evidence="5">
    <location>
        <position position="85"/>
    </location>
    <ligand>
        <name>Mg(2+)</name>
        <dbReference type="ChEBI" id="CHEBI:18420"/>
    </ligand>
</feature>
<feature type="disulfide bond" evidence="3">
    <location>
        <begin position="45"/>
        <end position="51"/>
    </location>
</feature>
<feature type="disulfide bond" evidence="3">
    <location>
        <begin position="47"/>
        <end position="190"/>
    </location>
</feature>
<feature type="non-terminal residue">
    <location>
        <position position="1"/>
    </location>
</feature>
<accession>C0JB76</accession>
<protein>
    <recommendedName>
        <fullName evidence="6">Dermonecrotic toxin SdSicTox-betaIIB1ai</fullName>
        <ecNumber evidence="4">4.6.1.-</ecNumber>
    </recommendedName>
    <alternativeName>
        <fullName>Phospholipase D</fullName>
        <shortName>PLD</shortName>
    </alternativeName>
    <alternativeName>
        <fullName>Sphingomyelin phosphodiesterase D</fullName>
        <shortName>SMD</shortName>
        <shortName>SMase D</shortName>
        <shortName>Sphingomyelinase D</shortName>
    </alternativeName>
</protein>
<organism>
    <name type="scientific">Sicarius cf. damarensis (strain GJB-2008)</name>
    <name type="common">Six-eyed sand spider</name>
    <dbReference type="NCBI Taxonomy" id="575956"/>
    <lineage>
        <taxon>Eukaryota</taxon>
        <taxon>Metazoa</taxon>
        <taxon>Ecdysozoa</taxon>
        <taxon>Arthropoda</taxon>
        <taxon>Chelicerata</taxon>
        <taxon>Arachnida</taxon>
        <taxon>Araneae</taxon>
        <taxon>Araneomorphae</taxon>
        <taxon>Haplogynae</taxon>
        <taxon>Scytodoidea</taxon>
        <taxon>Sicariidae</taxon>
        <taxon>Sicarius</taxon>
    </lineage>
</organism>
<reference key="1">
    <citation type="journal article" date="2009" name="Mol. Biol. Evol.">
        <title>Molecular evolution, functional variation, and proposed nomenclature of the gene family that includes sphingomyelinase D in sicariid spider venoms.</title>
        <authorList>
            <person name="Binford G.J."/>
            <person name="Bodner M.R."/>
            <person name="Cordes M.H."/>
            <person name="Baldwin K.L."/>
            <person name="Rynerson M.R."/>
            <person name="Burns S.N."/>
            <person name="Zobel-Thropp P.A."/>
        </authorList>
    </citation>
    <scope>NUCLEOTIDE SEQUENCE [MRNA]</scope>
    <scope>NOMENCLATURE</scope>
    <source>
        <tissue>Venom gland</tissue>
    </source>
</reference>
<proteinExistence type="evidence at transcript level"/>
<keyword id="KW-0204">Cytolysis</keyword>
<keyword id="KW-1061">Dermonecrotic toxin</keyword>
<keyword id="KW-1015">Disulfide bond</keyword>
<keyword id="KW-0354">Hemolysis</keyword>
<keyword id="KW-0442">Lipid degradation</keyword>
<keyword id="KW-0443">Lipid metabolism</keyword>
<keyword id="KW-0456">Lyase</keyword>
<keyword id="KW-0460">Magnesium</keyword>
<keyword id="KW-0479">Metal-binding</keyword>
<keyword id="KW-0964">Secreted</keyword>
<keyword id="KW-0800">Toxin</keyword>
<sequence length="274" mass="31743">WIMGHMVNAIEQVDEFLNLGANAIEFDIDFDKDGIAQITHHGIPCDCGRKCTKKAIFTEYLDNIRQVTTPDDPKFREQLVLLALDLKLQRISSAKAYRAGEDVAKKLLDHYWQRGNSKARAYILLNIPLVEDYEFIRAFKDTLKNEGYESYNDKVGINFTGNEDLDKIRDVLEILGIHKQVWRADGITSCFARGTERLKEALKKRDTPGYNYINKVYAWTLVRKSIMRRSLRLGVDGVMSNNPDRVIKVLKEKEFADKFRLATYNDNPWEKFRG</sequence>
<name>B2KA1_SICCD</name>
<evidence type="ECO:0000250" key="1">
    <source>
        <dbReference type="UniProtKB" id="A0A0D4WTV1"/>
    </source>
</evidence>
<evidence type="ECO:0000250" key="2">
    <source>
        <dbReference type="UniProtKB" id="A0A0D4WV12"/>
    </source>
</evidence>
<evidence type="ECO:0000250" key="3">
    <source>
        <dbReference type="UniProtKB" id="P0CE80"/>
    </source>
</evidence>
<evidence type="ECO:0000250" key="4">
    <source>
        <dbReference type="UniProtKB" id="Q4ZFU2"/>
    </source>
</evidence>
<evidence type="ECO:0000250" key="5">
    <source>
        <dbReference type="UniProtKB" id="Q8I914"/>
    </source>
</evidence>
<evidence type="ECO:0000303" key="6">
    <source>
    </source>
</evidence>
<evidence type="ECO:0000305" key="7"/>
<evidence type="ECO:0000305" key="8">
    <source>
    </source>
</evidence>
<dbReference type="EC" id="4.6.1.-" evidence="4"/>
<dbReference type="EMBL" id="FJ171511">
    <property type="protein sequence ID" value="ACN49007.1"/>
    <property type="molecule type" value="mRNA"/>
</dbReference>
<dbReference type="SMR" id="C0JB76"/>
<dbReference type="GO" id="GO:0005576">
    <property type="term" value="C:extracellular region"/>
    <property type="evidence" value="ECO:0007669"/>
    <property type="project" value="UniProtKB-SubCell"/>
</dbReference>
<dbReference type="GO" id="GO:0016829">
    <property type="term" value="F:lyase activity"/>
    <property type="evidence" value="ECO:0007669"/>
    <property type="project" value="UniProtKB-KW"/>
</dbReference>
<dbReference type="GO" id="GO:0046872">
    <property type="term" value="F:metal ion binding"/>
    <property type="evidence" value="ECO:0007669"/>
    <property type="project" value="UniProtKB-KW"/>
</dbReference>
<dbReference type="GO" id="GO:0008081">
    <property type="term" value="F:phosphoric diester hydrolase activity"/>
    <property type="evidence" value="ECO:0007669"/>
    <property type="project" value="InterPro"/>
</dbReference>
<dbReference type="GO" id="GO:0090729">
    <property type="term" value="F:toxin activity"/>
    <property type="evidence" value="ECO:0007669"/>
    <property type="project" value="UniProtKB-KW"/>
</dbReference>
<dbReference type="GO" id="GO:0031640">
    <property type="term" value="P:killing of cells of another organism"/>
    <property type="evidence" value="ECO:0007669"/>
    <property type="project" value="UniProtKB-KW"/>
</dbReference>
<dbReference type="GO" id="GO:0016042">
    <property type="term" value="P:lipid catabolic process"/>
    <property type="evidence" value="ECO:0007669"/>
    <property type="project" value="UniProtKB-KW"/>
</dbReference>
<dbReference type="CDD" id="cd08576">
    <property type="entry name" value="GDPD_like_SMaseD_PLD"/>
    <property type="match status" value="1"/>
</dbReference>
<dbReference type="Gene3D" id="3.20.20.190">
    <property type="entry name" value="Phosphatidylinositol (PI) phosphodiesterase"/>
    <property type="match status" value="1"/>
</dbReference>
<dbReference type="InterPro" id="IPR017946">
    <property type="entry name" value="PLC-like_Pdiesterase_TIM-brl"/>
</dbReference>
<dbReference type="SUPFAM" id="SSF51695">
    <property type="entry name" value="PLC-like phosphodiesterases"/>
    <property type="match status" value="1"/>
</dbReference>
<comment type="function">
    <text evidence="1 3">Dermonecrotic toxins cleave the phosphodiester linkage between the phosphate and headgroup of certain phospholipids (sphingolipid and lysolipid substrates), forming an alcohol (often choline) and a cyclic phosphate (By similarity). This toxin acts on sphingomyelin (SM) (By similarity). It may also act on ceramide phosphoethanolamine (CPE), lysophosphatidylcholine (LPC) and lysophosphatidylethanolamine (LPE), but not on lysophosphatidylserine (LPS), and lysophosphatidylglycerol (LPG) (By similarity). It acts by transphosphatidylation, releasing exclusively cyclic phosphate products as second products (By similarity). Induces dermonecrosis, hemolysis, increased vascular permeability, edema, inflammatory response, and platelet aggregation (By similarity).</text>
</comment>
<comment type="catalytic activity">
    <reaction evidence="1">
        <text>an N-(acyl)-sphingosylphosphocholine = an N-(acyl)-sphingosyl-1,3-cyclic phosphate + choline</text>
        <dbReference type="Rhea" id="RHEA:60652"/>
        <dbReference type="ChEBI" id="CHEBI:15354"/>
        <dbReference type="ChEBI" id="CHEBI:64583"/>
        <dbReference type="ChEBI" id="CHEBI:143892"/>
    </reaction>
</comment>
<comment type="catalytic activity">
    <reaction evidence="1">
        <text>an N-(acyl)-sphingosylphosphoethanolamine = an N-(acyl)-sphingosyl-1,3-cyclic phosphate + ethanolamine</text>
        <dbReference type="Rhea" id="RHEA:60648"/>
        <dbReference type="ChEBI" id="CHEBI:57603"/>
        <dbReference type="ChEBI" id="CHEBI:143891"/>
        <dbReference type="ChEBI" id="CHEBI:143892"/>
    </reaction>
</comment>
<comment type="catalytic activity">
    <reaction evidence="1">
        <text>a 1-acyl-sn-glycero-3-phosphocholine = a 1-acyl-sn-glycero-2,3-cyclic phosphate + choline</text>
        <dbReference type="Rhea" id="RHEA:60700"/>
        <dbReference type="ChEBI" id="CHEBI:15354"/>
        <dbReference type="ChEBI" id="CHEBI:58168"/>
        <dbReference type="ChEBI" id="CHEBI:143947"/>
    </reaction>
</comment>
<comment type="catalytic activity">
    <reaction evidence="1">
        <text>a 1-acyl-sn-glycero-3-phosphoethanolamine = a 1-acyl-sn-glycero-2,3-cyclic phosphate + ethanolamine</text>
        <dbReference type="Rhea" id="RHEA:60704"/>
        <dbReference type="ChEBI" id="CHEBI:57603"/>
        <dbReference type="ChEBI" id="CHEBI:64381"/>
        <dbReference type="ChEBI" id="CHEBI:143947"/>
    </reaction>
</comment>
<comment type="cofactor">
    <cofactor evidence="5">
        <name>Mg(2+)</name>
        <dbReference type="ChEBI" id="CHEBI:18420"/>
    </cofactor>
    <text evidence="5">Binds 1 Mg(2+) ion per subunit.</text>
</comment>
<comment type="subcellular location">
    <subcellularLocation>
        <location evidence="8">Secreted</location>
    </subcellularLocation>
</comment>
<comment type="tissue specificity">
    <text evidence="8">Expressed by the venom gland.</text>
</comment>
<comment type="similarity">
    <text evidence="7">Belongs to the arthropod phospholipase D family. Class II subfamily.</text>
</comment>
<comment type="caution">
    <text evidence="1 2 4">The most common activity assay for dermonecrotic toxins detects enzymatic activity by monitoring choline release from substrate. Liberation of choline from sphingomyelin (SM) or lysophosphatidylcholine (LPC) is commonly assumed to result from substrate hydrolysis, giving either ceramide-1-phosphate (C1P) or lysophosphatidic acid (LPA), respectively, as a second product. However, two studies from Lajoie and colleagues (2013 and 2015) report the observation of exclusive formation of cyclic phosphate products as second products, resulting from intramolecular transphosphatidylation. Cyclic phosphates have vastly different biological properties from their monoester counterparts, and they may be relevant to the pathology of brown spider envenomation.</text>
</comment>